<organism>
    <name type="scientific">Schizosaccharomyces pombe (strain 972 / ATCC 24843)</name>
    <name type="common">Fission yeast</name>
    <dbReference type="NCBI Taxonomy" id="284812"/>
    <lineage>
        <taxon>Eukaryota</taxon>
        <taxon>Fungi</taxon>
        <taxon>Dikarya</taxon>
        <taxon>Ascomycota</taxon>
        <taxon>Taphrinomycotina</taxon>
        <taxon>Schizosaccharomycetes</taxon>
        <taxon>Schizosaccharomycetales</taxon>
        <taxon>Schizosaccharomycetaceae</taxon>
        <taxon>Schizosaccharomyces</taxon>
    </lineage>
</organism>
<dbReference type="EC" id="3.2.1.-"/>
<dbReference type="EMBL" id="CU329670">
    <property type="protein sequence ID" value="CAB11675.1"/>
    <property type="molecule type" value="Genomic_DNA"/>
</dbReference>
<dbReference type="PIR" id="T38448">
    <property type="entry name" value="T38448"/>
</dbReference>
<dbReference type="RefSeq" id="NP_594401.1">
    <property type="nucleotide sequence ID" value="NM_001019832.2"/>
</dbReference>
<dbReference type="SMR" id="O13996"/>
<dbReference type="BioGRID" id="279134">
    <property type="interactions" value="3"/>
</dbReference>
<dbReference type="FunCoup" id="O13996">
    <property type="interactions" value="118"/>
</dbReference>
<dbReference type="STRING" id="284812.O13996"/>
<dbReference type="CAZy" id="GH13">
    <property type="family name" value="Glycoside Hydrolase Family 13"/>
</dbReference>
<dbReference type="iPTMnet" id="O13996"/>
<dbReference type="PaxDb" id="4896-SPAC27E2.01.1"/>
<dbReference type="EnsemblFungi" id="SPAC27E2.01.1">
    <property type="protein sequence ID" value="SPAC27E2.01.1:pep"/>
    <property type="gene ID" value="SPAC27E2.01"/>
</dbReference>
<dbReference type="KEGG" id="spo:2542681"/>
<dbReference type="PomBase" id="SPAC27E2.01"/>
<dbReference type="VEuPathDB" id="FungiDB:SPAC27E2.01"/>
<dbReference type="eggNOG" id="KOG0471">
    <property type="taxonomic scope" value="Eukaryota"/>
</dbReference>
<dbReference type="HOGENOM" id="CLU_006462_7_2_1"/>
<dbReference type="InParanoid" id="O13996"/>
<dbReference type="OMA" id="GFNPVNR"/>
<dbReference type="PhylomeDB" id="O13996"/>
<dbReference type="PRO" id="PR:O13996"/>
<dbReference type="Proteomes" id="UP000002485">
    <property type="component" value="Chromosome I"/>
</dbReference>
<dbReference type="GO" id="GO:0009986">
    <property type="term" value="C:cell surface"/>
    <property type="evidence" value="ECO:0000305"/>
    <property type="project" value="PomBase"/>
</dbReference>
<dbReference type="GO" id="GO:0005829">
    <property type="term" value="C:cytosol"/>
    <property type="evidence" value="ECO:0007005"/>
    <property type="project" value="PomBase"/>
</dbReference>
<dbReference type="GO" id="GO:0005634">
    <property type="term" value="C:nucleus"/>
    <property type="evidence" value="ECO:0007005"/>
    <property type="project" value="PomBase"/>
</dbReference>
<dbReference type="GO" id="GO:0004556">
    <property type="term" value="F:alpha-amylase activity"/>
    <property type="evidence" value="ECO:0007669"/>
    <property type="project" value="InterPro"/>
</dbReference>
<dbReference type="GO" id="GO:0005509">
    <property type="term" value="F:calcium ion binding"/>
    <property type="evidence" value="ECO:0007669"/>
    <property type="project" value="InterPro"/>
</dbReference>
<dbReference type="GO" id="GO:0016052">
    <property type="term" value="P:carbohydrate catabolic process"/>
    <property type="evidence" value="ECO:0000305"/>
    <property type="project" value="PomBase"/>
</dbReference>
<dbReference type="CDD" id="cd11319">
    <property type="entry name" value="AmyAc_euk_AmyA"/>
    <property type="match status" value="1"/>
</dbReference>
<dbReference type="FunFam" id="3.20.20.80:FF:000120">
    <property type="entry name" value="Alpha-amylase A"/>
    <property type="match status" value="1"/>
</dbReference>
<dbReference type="Gene3D" id="3.20.20.80">
    <property type="entry name" value="Glycosidases"/>
    <property type="match status" value="1"/>
</dbReference>
<dbReference type="Gene3D" id="2.60.40.1180">
    <property type="entry name" value="Golgi alpha-mannosidase II"/>
    <property type="match status" value="1"/>
</dbReference>
<dbReference type="InterPro" id="IPR013777">
    <property type="entry name" value="A-amylase-like"/>
</dbReference>
<dbReference type="InterPro" id="IPR006047">
    <property type="entry name" value="Glyco_hydro_13_cat_dom"/>
</dbReference>
<dbReference type="InterPro" id="IPR013780">
    <property type="entry name" value="Glyco_hydro_b"/>
</dbReference>
<dbReference type="InterPro" id="IPR017853">
    <property type="entry name" value="Glycoside_hydrolase_SF"/>
</dbReference>
<dbReference type="PANTHER" id="PTHR10357:SF229">
    <property type="entry name" value="ALPHA-AMYLASE"/>
    <property type="match status" value="1"/>
</dbReference>
<dbReference type="PANTHER" id="PTHR10357">
    <property type="entry name" value="ALPHA-AMYLASE FAMILY MEMBER"/>
    <property type="match status" value="1"/>
</dbReference>
<dbReference type="Pfam" id="PF00128">
    <property type="entry name" value="Alpha-amylase"/>
    <property type="match status" value="1"/>
</dbReference>
<dbReference type="PIRSF" id="PIRSF001024">
    <property type="entry name" value="Alph-amyl_fung"/>
    <property type="match status" value="1"/>
</dbReference>
<dbReference type="SMART" id="SM00642">
    <property type="entry name" value="Aamy"/>
    <property type="match status" value="1"/>
</dbReference>
<dbReference type="SUPFAM" id="SSF51445">
    <property type="entry name" value="(Trans)glycosidases"/>
    <property type="match status" value="1"/>
</dbReference>
<dbReference type="SUPFAM" id="SSF51011">
    <property type="entry name" value="Glycosyl hydrolase domain"/>
    <property type="match status" value="1"/>
</dbReference>
<proteinExistence type="inferred from homology"/>
<name>YEI1_SCHPO</name>
<protein>
    <recommendedName>
        <fullName>Uncharacterized glycosyl hydrolase C27E2.01</fullName>
        <ecNumber>3.2.1.-</ecNumber>
    </recommendedName>
</protein>
<evidence type="ECO:0000250" key="1"/>
<evidence type="ECO:0000269" key="2">
    <source>
    </source>
</evidence>
<evidence type="ECO:0000305" key="3"/>
<reference key="1">
    <citation type="journal article" date="2002" name="Nature">
        <title>The genome sequence of Schizosaccharomyces pombe.</title>
        <authorList>
            <person name="Wood V."/>
            <person name="Gwilliam R."/>
            <person name="Rajandream M.A."/>
            <person name="Lyne M.H."/>
            <person name="Lyne R."/>
            <person name="Stewart A."/>
            <person name="Sgouros J.G."/>
            <person name="Peat N."/>
            <person name="Hayles J."/>
            <person name="Baker S.G."/>
            <person name="Basham D."/>
            <person name="Bowman S."/>
            <person name="Brooks K."/>
            <person name="Brown D."/>
            <person name="Brown S."/>
            <person name="Chillingworth T."/>
            <person name="Churcher C.M."/>
            <person name="Collins M."/>
            <person name="Connor R."/>
            <person name="Cronin A."/>
            <person name="Davis P."/>
            <person name="Feltwell T."/>
            <person name="Fraser A."/>
            <person name="Gentles S."/>
            <person name="Goble A."/>
            <person name="Hamlin N."/>
            <person name="Harris D.E."/>
            <person name="Hidalgo J."/>
            <person name="Hodgson G."/>
            <person name="Holroyd S."/>
            <person name="Hornsby T."/>
            <person name="Howarth S."/>
            <person name="Huckle E.J."/>
            <person name="Hunt S."/>
            <person name="Jagels K."/>
            <person name="James K.D."/>
            <person name="Jones L."/>
            <person name="Jones M."/>
            <person name="Leather S."/>
            <person name="McDonald S."/>
            <person name="McLean J."/>
            <person name="Mooney P."/>
            <person name="Moule S."/>
            <person name="Mungall K.L."/>
            <person name="Murphy L.D."/>
            <person name="Niblett D."/>
            <person name="Odell C."/>
            <person name="Oliver K."/>
            <person name="O'Neil S."/>
            <person name="Pearson D."/>
            <person name="Quail M.A."/>
            <person name="Rabbinowitsch E."/>
            <person name="Rutherford K.M."/>
            <person name="Rutter S."/>
            <person name="Saunders D."/>
            <person name="Seeger K."/>
            <person name="Sharp S."/>
            <person name="Skelton J."/>
            <person name="Simmonds M.N."/>
            <person name="Squares R."/>
            <person name="Squares S."/>
            <person name="Stevens K."/>
            <person name="Taylor K."/>
            <person name="Taylor R.G."/>
            <person name="Tivey A."/>
            <person name="Walsh S.V."/>
            <person name="Warren T."/>
            <person name="Whitehead S."/>
            <person name="Woodward J.R."/>
            <person name="Volckaert G."/>
            <person name="Aert R."/>
            <person name="Robben J."/>
            <person name="Grymonprez B."/>
            <person name="Weltjens I."/>
            <person name="Vanstreels E."/>
            <person name="Rieger M."/>
            <person name="Schaefer M."/>
            <person name="Mueller-Auer S."/>
            <person name="Gabel C."/>
            <person name="Fuchs M."/>
            <person name="Duesterhoeft A."/>
            <person name="Fritzc C."/>
            <person name="Holzer E."/>
            <person name="Moestl D."/>
            <person name="Hilbert H."/>
            <person name="Borzym K."/>
            <person name="Langer I."/>
            <person name="Beck A."/>
            <person name="Lehrach H."/>
            <person name="Reinhardt R."/>
            <person name="Pohl T.M."/>
            <person name="Eger P."/>
            <person name="Zimmermann W."/>
            <person name="Wedler H."/>
            <person name="Wambutt R."/>
            <person name="Purnelle B."/>
            <person name="Goffeau A."/>
            <person name="Cadieu E."/>
            <person name="Dreano S."/>
            <person name="Gloux S."/>
            <person name="Lelaure V."/>
            <person name="Mottier S."/>
            <person name="Galibert F."/>
            <person name="Aves S.J."/>
            <person name="Xiang Z."/>
            <person name="Hunt C."/>
            <person name="Moore K."/>
            <person name="Hurst S.M."/>
            <person name="Lucas M."/>
            <person name="Rochet M."/>
            <person name="Gaillardin C."/>
            <person name="Tallada V.A."/>
            <person name="Garzon A."/>
            <person name="Thode G."/>
            <person name="Daga R.R."/>
            <person name="Cruzado L."/>
            <person name="Jimenez J."/>
            <person name="Sanchez M."/>
            <person name="del Rey F."/>
            <person name="Benito J."/>
            <person name="Dominguez A."/>
            <person name="Revuelta J.L."/>
            <person name="Moreno S."/>
            <person name="Armstrong J."/>
            <person name="Forsburg S.L."/>
            <person name="Cerutti L."/>
            <person name="Lowe T."/>
            <person name="McCombie W.R."/>
            <person name="Paulsen I."/>
            <person name="Potashkin J."/>
            <person name="Shpakovski G.V."/>
            <person name="Ussery D."/>
            <person name="Barrell B.G."/>
            <person name="Nurse P."/>
        </authorList>
    </citation>
    <scope>NUCLEOTIDE SEQUENCE [LARGE SCALE GENOMIC DNA]</scope>
    <source>
        <strain>972 / ATCC 24843</strain>
    </source>
</reference>
<reference key="2">
    <citation type="journal article" date="2006" name="Nat. Biotechnol.">
        <title>ORFeome cloning and global analysis of protein localization in the fission yeast Schizosaccharomyces pombe.</title>
        <authorList>
            <person name="Matsuyama A."/>
            <person name="Arai R."/>
            <person name="Yashiroda Y."/>
            <person name="Shirai A."/>
            <person name="Kamata A."/>
            <person name="Sekido S."/>
            <person name="Kobayashi Y."/>
            <person name="Hashimoto A."/>
            <person name="Hamamoto M."/>
            <person name="Hiraoka Y."/>
            <person name="Horinouchi S."/>
            <person name="Yoshida M."/>
        </authorList>
    </citation>
    <scope>SUBCELLULAR LOCATION [LARGE SCALE ANALYSIS]</scope>
</reference>
<comment type="cofactor">
    <cofactor evidence="1">
        <name>Ca(2+)</name>
        <dbReference type="ChEBI" id="CHEBI:29108"/>
    </cofactor>
    <text evidence="1">Binds 2 calcium ions per subunit.</text>
</comment>
<comment type="subcellular location">
    <subcellularLocation>
        <location evidence="2">Cytoplasm</location>
    </subcellularLocation>
    <subcellularLocation>
        <location evidence="2">Nucleus</location>
    </subcellularLocation>
</comment>
<comment type="similarity">
    <text evidence="3">Belongs to the glycosyl hydrolase 13 family.</text>
</comment>
<sequence>MSLDKQIPIIYDFGENYEKNKDIWRRQCIYQILTDRFALDDHCTTAPSTGRMYLGGTWRGIIQKLDYIQSLGCTAVWISPIVKNIEGVTGYGEAYHGYWAEDLTQLNPHFGTKQDLTELVDQLHKRNMLCMIDIVVNHMAHAGDSPIDYSKYAPFNSPSHYHPKRFLHNYDDTWDCEIAWLGDEVVSLMDIRTEDQEVHNFFQNWIRDLIQTYHFDGLRIDTAKHVQKEFYPPFIAAANVFAFGEVYHGDPKFIAKYLEYIPSAANYPLYYQIENTFFPPKQSMNIFYQKAILEARATSMDTTILGNFTENHDVPRFLNRSTDYSLLCNTLTLLLFTDGIPIIFQGQEQMYAGGHDPENRDALWTSNYNQQNPIFQFLKKLIKLRQFLVDNVSGFTTELSNMLFVNEHVYVFRRPGVIIVVSNAGSNSDVDTSAEFSITERESLEFIDVLSGSQFSSLPTEDSSTISMNLEFSFPRVLVHRGLFHSMNELA</sequence>
<keyword id="KW-0106">Calcium</keyword>
<keyword id="KW-0119">Carbohydrate metabolism</keyword>
<keyword id="KW-0963">Cytoplasm</keyword>
<keyword id="KW-0326">Glycosidase</keyword>
<keyword id="KW-0378">Hydrolase</keyword>
<keyword id="KW-0479">Metal-binding</keyword>
<keyword id="KW-0539">Nucleus</keyword>
<keyword id="KW-1185">Reference proteome</keyword>
<feature type="chain" id="PRO_0000310320" description="Uncharacterized glycosyl hydrolase C27E2.01">
    <location>
        <begin position="1"/>
        <end position="491"/>
    </location>
</feature>
<feature type="active site" description="Nucleophile" evidence="1">
    <location>
        <position position="221"/>
    </location>
</feature>
<feature type="active site" description="Proton donor" evidence="1">
    <location>
        <position position="245"/>
    </location>
</feature>
<feature type="binding site" evidence="1">
    <location>
        <position position="99"/>
    </location>
    <ligand>
        <name>substrate</name>
    </ligand>
</feature>
<feature type="binding site" evidence="1">
    <location>
        <position position="137"/>
    </location>
    <ligand>
        <name>Ca(2+)</name>
        <dbReference type="ChEBI" id="CHEBI:29108"/>
        <label>1</label>
    </ligand>
</feature>
<feature type="binding site" evidence="1">
    <location>
        <position position="138"/>
    </location>
    <ligand>
        <name>substrate</name>
    </ligand>
</feature>
<feature type="binding site" evidence="1">
    <location>
        <position position="177"/>
    </location>
    <ligand>
        <name>Ca(2+)</name>
        <dbReference type="ChEBI" id="CHEBI:29108"/>
        <label>1</label>
    </ligand>
</feature>
<feature type="binding site" evidence="1">
    <location>
        <position position="190"/>
    </location>
    <ligand>
        <name>Ca(2+)</name>
        <dbReference type="ChEBI" id="CHEBI:29108"/>
        <label>1</label>
    </ligand>
</feature>
<feature type="binding site" evidence="1">
    <location>
        <position position="219"/>
    </location>
    <ligand>
        <name>substrate</name>
    </ligand>
</feature>
<feature type="binding site" evidence="1">
    <location>
        <position position="221"/>
    </location>
    <ligand>
        <name>Ca(2+)</name>
        <dbReference type="ChEBI" id="CHEBI:29108"/>
        <label>2</label>
    </ligand>
</feature>
<feature type="binding site" evidence="1">
    <location>
        <begin position="224"/>
        <end position="225"/>
    </location>
    <ligand>
        <name>substrate</name>
    </ligand>
</feature>
<feature type="binding site" evidence="1">
    <location>
        <position position="225"/>
    </location>
    <ligand>
        <name>Ca(2+)</name>
        <dbReference type="ChEBI" id="CHEBI:29108"/>
        <label>1</label>
    </ligand>
</feature>
<feature type="binding site" evidence="1">
    <location>
        <position position="245"/>
    </location>
    <ligand>
        <name>Ca(2+)</name>
        <dbReference type="ChEBI" id="CHEBI:29108"/>
        <label>2</label>
    </ligand>
</feature>
<feature type="binding site" evidence="1">
    <location>
        <position position="249"/>
    </location>
    <ligand>
        <name>substrate</name>
    </ligand>
</feature>
<feature type="binding site" evidence="1">
    <location>
        <position position="312"/>
    </location>
    <ligand>
        <name>substrate</name>
    </ligand>
</feature>
<feature type="binding site" evidence="1">
    <location>
        <position position="360"/>
    </location>
    <ligand>
        <name>substrate</name>
    </ligand>
</feature>
<feature type="site" description="Transition state stabilizer" evidence="1">
    <location>
        <position position="313"/>
    </location>
</feature>
<gene>
    <name type="ORF">SPAC27E2.01</name>
</gene>
<accession>O13996</accession>